<name>UBIQH_DICDI</name>
<comment type="function">
    <text evidence="1">Ubiquitin exists either covalently attached to another protein, or free (unanchored). When covalently bound, it is conjugated to target proteins via an isopeptide bond either as a monomer (monoubiquitin), a polymer linked via different Lys residues of the ubiquitin (polyubiquitin chains) or a linear polymer linked via the initiator Met of the ubiquitin (linear polyubiquitin chains). Polyubiquitin chains, when attached to a target protein, have different functions depending on the Lys residue of the ubiquitin that is linked: Lys-48-linked is involved in protein degradation via the proteasome. Linear polymer chains formed via attachment by the initiator Met lead to cell signaling. Ubiquitin is usually conjugated to Lys residues of target proteins, however, in rare cases, conjugation to Cys or Ser residues has been observed. When polyubiquitin is free (unanchored-polyubiquitin), it also has distinct roles, such as in activation of protein kinases, and in signaling (By similarity).</text>
</comment>
<comment type="subcellular location">
    <subcellularLocation>
        <location evidence="1">Cytoplasm</location>
    </subcellularLocation>
    <subcellularLocation>
        <location evidence="1">Nucleus</location>
    </subcellularLocation>
</comment>
<comment type="miscellaneous">
    <text>Ubiquitin is synthesized as a polyubiquitin precursor with exact head to tail repeats. Some ubiquitin genes contain a single copy of ubiquitin fused to a ribosomal protein. In D.discoideum there are 9 genes: ubqA: 5 copies of Ub and a final Asn; ubqB: 1 copy of Ub and ribosomal protein eL40; ubqC: 1 copy of Ub and ribosomal protein eS31; ubqD: 3 copies of Ub and a final Leu; ubqF: 7 copies of Ub and a final Asn; ubqG: 5 copies of Ub and a final Leu; ubqH: 5 copies of Ub and a final Asn; ubqI: 4 copies of Ub and a final Asn; ubqJ: 4 copies of Ub and a final Asn.</text>
</comment>
<comment type="miscellaneous">
    <text>For the sake of clarity sequence features are annotated only for the first chain, and are not repeated for each of the following chains.</text>
</comment>
<comment type="similarity">
    <text evidence="3">Belongs to the ubiquitin family.</text>
</comment>
<proteinExistence type="evidence at protein level"/>
<sequence length="381" mass="42777">MQIFVKTLTGKTITLEVEGSDNIENVKAKIQDKEGIPPDQQRLIFAGKQLEDGRTLSDYNIQKESTLHLVLRLRGGMQIFVKTLTGKTITLEVEGSDNIENVKAKIQDKEGIPPDQQRLIFAGKQLEDGRTLSDYNIQKESTLHLVLRLRGGMQIFVKTLTGKTITLEVEGSDNIENVKAKIQDKEGIPPDQQRLIFAGKQLEDGRTLSDYNIQKESTLHLVLRLRGGMQIFVKTLTGKTITLEVEGSDNIENVKAKIQDKEGIPPDQQRLIFAGKQLEDGRTLSDYNIQKESTLHLVLRLRGGMQIFVKTLTGKTITLEVECSDNIENVKAKIQDKEGIPPDQQRLIFAGKQLEDGRTLSDYNIQKESTLHLVLRLRGGN</sequence>
<feature type="chain" id="PRO_0000396335" description="Ubiquitin">
    <location>
        <begin position="1"/>
        <end position="76"/>
    </location>
</feature>
<feature type="chain" id="PRO_0000396336" description="Ubiquitin">
    <location>
        <begin position="77"/>
        <end position="152"/>
    </location>
</feature>
<feature type="chain" id="PRO_0000396337" description="Ubiquitin">
    <location>
        <begin position="153"/>
        <end position="228"/>
    </location>
</feature>
<feature type="chain" id="PRO_0000396338" description="Ubiquitin">
    <location>
        <begin position="229"/>
        <end position="304"/>
    </location>
</feature>
<feature type="chain" id="PRO_0000396339" description="Ubiquitin-like">
    <location>
        <begin position="305"/>
        <end position="380"/>
    </location>
</feature>
<feature type="propeptide" id="PRO_0000396340">
    <location>
        <position position="381"/>
    </location>
</feature>
<feature type="domain" description="Ubiquitin-like 1" evidence="2">
    <location>
        <begin position="1"/>
        <end position="76"/>
    </location>
</feature>
<feature type="domain" description="Ubiquitin-like 2" evidence="2">
    <location>
        <begin position="77"/>
        <end position="152"/>
    </location>
</feature>
<feature type="domain" description="Ubiquitin-like 3" evidence="2">
    <location>
        <begin position="153"/>
        <end position="228"/>
    </location>
</feature>
<feature type="domain" description="Ubiquitin-like 4" evidence="2">
    <location>
        <begin position="229"/>
        <end position="304"/>
    </location>
</feature>
<feature type="domain" description="Ubiquitin-like 5" evidence="2">
    <location>
        <begin position="305"/>
        <end position="380"/>
    </location>
</feature>
<feature type="cross-link" description="Glycyl lysine isopeptide (Lys-Gly) (interchain with G-Cter in ubiquitin)" evidence="1">
    <location>
        <position position="48"/>
    </location>
</feature>
<feature type="cross-link" description="Glycyl lysine isopeptide (Gly-Lys) (interchain with K-? in acceptor proteins)" evidence="2">
    <location>
        <position position="76"/>
    </location>
</feature>
<keyword id="KW-0963">Cytoplasm</keyword>
<keyword id="KW-1017">Isopeptide bond</keyword>
<keyword id="KW-0539">Nucleus</keyword>
<keyword id="KW-1185">Reference proteome</keyword>
<keyword id="KW-0677">Repeat</keyword>
<keyword id="KW-0832">Ubl conjugation</keyword>
<organism>
    <name type="scientific">Dictyostelium discoideum</name>
    <name type="common">Social amoeba</name>
    <dbReference type="NCBI Taxonomy" id="44689"/>
    <lineage>
        <taxon>Eukaryota</taxon>
        <taxon>Amoebozoa</taxon>
        <taxon>Evosea</taxon>
        <taxon>Eumycetozoa</taxon>
        <taxon>Dictyostelia</taxon>
        <taxon>Dictyosteliales</taxon>
        <taxon>Dictyosteliaceae</taxon>
        <taxon>Dictyostelium</taxon>
    </lineage>
</organism>
<gene>
    <name type="primary">ubqH</name>
    <name type="ORF">DDB_G0279721</name>
</gene>
<accession>P0CG81</accession>
<accession>P08618</accession>
<accession>Q54HH5</accession>
<accession>Q54L38</accession>
<accession>Q54SE1</accession>
<accession>Q54SP3</accession>
<accession>Q54UW7</accession>
<accession>Q54WJ3</accession>
<accession>Q550W7</accession>
<accession>Q55DZ5</accession>
<accession>Q86KQ4</accession>
<dbReference type="EMBL" id="AAFI02000032">
    <property type="protein sequence ID" value="EAL67635.1"/>
    <property type="molecule type" value="Genomic_DNA"/>
</dbReference>
<dbReference type="PIR" id="C34080">
    <property type="entry name" value="C34080"/>
</dbReference>
<dbReference type="RefSeq" id="XP_641560.1">
    <property type="nucleotide sequence ID" value="XM_636468.1"/>
</dbReference>
<dbReference type="SMR" id="P0CG81"/>
<dbReference type="FunCoup" id="P0CG81">
    <property type="interactions" value="305"/>
</dbReference>
<dbReference type="STRING" id="44689.P0CG81"/>
<dbReference type="PaxDb" id="44689-DDB0238741"/>
<dbReference type="EnsemblProtists" id="EAL67635">
    <property type="protein sequence ID" value="EAL67635"/>
    <property type="gene ID" value="DDB_G0279721"/>
</dbReference>
<dbReference type="GeneID" id="8622135"/>
<dbReference type="KEGG" id="ddi:DDB_G0279721"/>
<dbReference type="dictyBase" id="DDB_G0279721">
    <property type="gene designation" value="ubqH"/>
</dbReference>
<dbReference type="VEuPathDB" id="AmoebaDB:DDB_G0279721"/>
<dbReference type="eggNOG" id="KOG0001">
    <property type="taxonomic scope" value="Eukaryota"/>
</dbReference>
<dbReference type="HOGENOM" id="CLU_010412_7_0_1"/>
<dbReference type="InParanoid" id="P0CG81"/>
<dbReference type="OMA" id="WISKRVP"/>
<dbReference type="PhylomeDB" id="P0CG81"/>
<dbReference type="Reactome" id="R-DDI-110314">
    <property type="pathway name" value="Recognition of DNA damage by PCNA-containing replication complex"/>
</dbReference>
<dbReference type="Reactome" id="R-DDI-1169408">
    <property type="pathway name" value="ISG15 antiviral mechanism"/>
</dbReference>
<dbReference type="Reactome" id="R-DDI-1358803">
    <property type="pathway name" value="Downregulation of ERBB2:ERBB3 signaling"/>
</dbReference>
<dbReference type="Reactome" id="R-DDI-174048">
    <property type="pathway name" value="APC/C:Cdc20 mediated degradation of Cyclin B"/>
</dbReference>
<dbReference type="Reactome" id="R-DDI-174084">
    <property type="pathway name" value="Autodegradation of Cdh1 by Cdh1:APC/C"/>
</dbReference>
<dbReference type="Reactome" id="R-DDI-174154">
    <property type="pathway name" value="APC/C:Cdc20 mediated degradation of Securin"/>
</dbReference>
<dbReference type="Reactome" id="R-DDI-174178">
    <property type="pathway name" value="APC/C:Cdh1 mediated degradation of Cdc20 and other APC/C:Cdh1 targeted proteins in late mitosis/early G1"/>
</dbReference>
<dbReference type="Reactome" id="R-DDI-174184">
    <property type="pathway name" value="Cdc20:Phospho-APC/C mediated degradation of Cyclin A"/>
</dbReference>
<dbReference type="Reactome" id="R-DDI-179409">
    <property type="pathway name" value="APC-Cdc20 mediated degradation of Nek2A"/>
</dbReference>
<dbReference type="Reactome" id="R-DDI-2467813">
    <property type="pathway name" value="Separation of Sister Chromatids"/>
</dbReference>
<dbReference type="Reactome" id="R-DDI-2559582">
    <property type="pathway name" value="Senescence-Associated Secretory Phenotype (SASP)"/>
</dbReference>
<dbReference type="Reactome" id="R-DDI-349425">
    <property type="pathway name" value="Autodegradation of the E3 ubiquitin ligase COP1"/>
</dbReference>
<dbReference type="Reactome" id="R-DDI-382556">
    <property type="pathway name" value="ABC-family proteins mediated transport"/>
</dbReference>
<dbReference type="Reactome" id="R-DDI-450408">
    <property type="pathway name" value="AUF1 (hnRNP D0) binds and destabilizes mRNA"/>
</dbReference>
<dbReference type="Reactome" id="R-DDI-4641258">
    <property type="pathway name" value="Degradation of DVL"/>
</dbReference>
<dbReference type="Reactome" id="R-DDI-532668">
    <property type="pathway name" value="N-glycan trimming in the ER and Calnexin/Calreticulin cycle"/>
</dbReference>
<dbReference type="Reactome" id="R-DDI-5358346">
    <property type="pathway name" value="Hedgehog ligand biogenesis"/>
</dbReference>
<dbReference type="Reactome" id="R-DDI-5632684">
    <property type="pathway name" value="Hedgehog 'on' state"/>
</dbReference>
<dbReference type="Reactome" id="R-DDI-5655862">
    <property type="pathway name" value="Translesion synthesis by POLK"/>
</dbReference>
<dbReference type="Reactome" id="R-DDI-5658442">
    <property type="pathway name" value="Regulation of RAS by GAPs"/>
</dbReference>
<dbReference type="Reactome" id="R-DDI-5675482">
    <property type="pathway name" value="Regulation of necroptotic cell death"/>
</dbReference>
<dbReference type="Reactome" id="R-DDI-5687128">
    <property type="pathway name" value="MAPK6/MAPK4 signaling"/>
</dbReference>
<dbReference type="Reactome" id="R-DDI-5689603">
    <property type="pathway name" value="UCH proteinases"/>
</dbReference>
<dbReference type="Reactome" id="R-DDI-5689877">
    <property type="pathway name" value="Josephin domain DUBs"/>
</dbReference>
<dbReference type="Reactome" id="R-DDI-5689880">
    <property type="pathway name" value="Ub-specific processing proteases"/>
</dbReference>
<dbReference type="Reactome" id="R-DDI-5689901">
    <property type="pathway name" value="Metalloprotease DUBs"/>
</dbReference>
<dbReference type="Reactome" id="R-DDI-5696394">
    <property type="pathway name" value="DNA Damage Recognition in GG-NER"/>
</dbReference>
<dbReference type="Reactome" id="R-DDI-5696395">
    <property type="pathway name" value="Formation of Incision Complex in GG-NER"/>
</dbReference>
<dbReference type="Reactome" id="R-DDI-5696397">
    <property type="pathway name" value="Gap-filling DNA repair synthesis and ligation in GG-NER"/>
</dbReference>
<dbReference type="Reactome" id="R-DDI-6781823">
    <property type="pathway name" value="Formation of TC-NER Pre-Incision Complex"/>
</dbReference>
<dbReference type="Reactome" id="R-DDI-6782135">
    <property type="pathway name" value="Dual incision in TC-NER"/>
</dbReference>
<dbReference type="Reactome" id="R-DDI-6782210">
    <property type="pathway name" value="Gap-filling DNA repair synthesis and ligation in TC-NER"/>
</dbReference>
<dbReference type="Reactome" id="R-DDI-68949">
    <property type="pathway name" value="Orc1 removal from chromatin"/>
</dbReference>
<dbReference type="Reactome" id="R-DDI-69017">
    <property type="pathway name" value="CDK-mediated phosphorylation and removal of Cdc6"/>
</dbReference>
<dbReference type="Reactome" id="R-DDI-69231">
    <property type="pathway name" value="Cyclin D associated events in G1"/>
</dbReference>
<dbReference type="Reactome" id="R-DDI-69601">
    <property type="pathway name" value="Ubiquitin Mediated Degradation of Phosphorylated Cdc25A"/>
</dbReference>
<dbReference type="Reactome" id="R-DDI-8854050">
    <property type="pathway name" value="FBXL7 down-regulates AURKA during mitotic entry and in early mitosis"/>
</dbReference>
<dbReference type="Reactome" id="R-DDI-8866652">
    <property type="pathway name" value="Synthesis of active ubiquitin: roles of E1 and E2 enzymes"/>
</dbReference>
<dbReference type="Reactome" id="R-DDI-8866654">
    <property type="pathway name" value="E3 ubiquitin ligases ubiquitinate target proteins"/>
</dbReference>
<dbReference type="Reactome" id="R-DDI-8948747">
    <property type="pathway name" value="Regulation of PTEN localization"/>
</dbReference>
<dbReference type="Reactome" id="R-DDI-8948751">
    <property type="pathway name" value="Regulation of PTEN stability and activity"/>
</dbReference>
<dbReference type="Reactome" id="R-DDI-8951664">
    <property type="pathway name" value="Neddylation"/>
</dbReference>
<dbReference type="Reactome" id="R-DDI-901032">
    <property type="pathway name" value="ER Quality Control Compartment (ERQC)"/>
</dbReference>
<dbReference type="Reactome" id="R-DDI-9020702">
    <property type="pathway name" value="Interleukin-1 signaling"/>
</dbReference>
<dbReference type="Reactome" id="R-DDI-9033241">
    <property type="pathway name" value="Peroxisomal protein import"/>
</dbReference>
<dbReference type="Reactome" id="R-DDI-917729">
    <property type="pathway name" value="Endosomal Sorting Complex Required For Transport (ESCRT)"/>
</dbReference>
<dbReference type="Reactome" id="R-DDI-917937">
    <property type="pathway name" value="Iron uptake and transport"/>
</dbReference>
<dbReference type="Reactome" id="R-DDI-936440">
    <property type="pathway name" value="Negative regulators of DDX58/IFIH1 signaling"/>
</dbReference>
<dbReference type="Reactome" id="R-DDI-9646399">
    <property type="pathway name" value="Aggrephagy"/>
</dbReference>
<dbReference type="Reactome" id="R-DDI-9664873">
    <property type="pathway name" value="Pexophagy"/>
</dbReference>
<dbReference type="Reactome" id="R-DDI-9755511">
    <property type="pathway name" value="KEAP1-NFE2L2 pathway"/>
</dbReference>
<dbReference type="Reactome" id="R-DDI-9758274">
    <property type="pathway name" value="Regulation of NF-kappa B signaling"/>
</dbReference>
<dbReference type="Reactome" id="R-DDI-983168">
    <property type="pathway name" value="Antigen processing: Ubiquitination &amp; Proteasome degradation"/>
</dbReference>
<dbReference type="Reactome" id="R-DDI-9861718">
    <property type="pathway name" value="Regulation of pyruvate metabolism"/>
</dbReference>
<dbReference type="Reactome" id="R-DDI-9909505">
    <property type="pathway name" value="Modulation of host responses by IFN-stimulated genes"/>
</dbReference>
<dbReference type="PRO" id="PR:P0CG81"/>
<dbReference type="Proteomes" id="UP000002195">
    <property type="component" value="Chromosome 3"/>
</dbReference>
<dbReference type="GO" id="GO:0005737">
    <property type="term" value="C:cytoplasm"/>
    <property type="evidence" value="ECO:0000318"/>
    <property type="project" value="GO_Central"/>
</dbReference>
<dbReference type="GO" id="GO:0005634">
    <property type="term" value="C:nucleus"/>
    <property type="evidence" value="ECO:0000318"/>
    <property type="project" value="GO_Central"/>
</dbReference>
<dbReference type="GO" id="GO:0031386">
    <property type="term" value="F:protein tag activity"/>
    <property type="evidence" value="ECO:0000318"/>
    <property type="project" value="GO_Central"/>
</dbReference>
<dbReference type="GO" id="GO:0031625">
    <property type="term" value="F:ubiquitin protein ligase binding"/>
    <property type="evidence" value="ECO:0000318"/>
    <property type="project" value="GO_Central"/>
</dbReference>
<dbReference type="GO" id="GO:0019941">
    <property type="term" value="P:modification-dependent protein catabolic process"/>
    <property type="evidence" value="ECO:0000318"/>
    <property type="project" value="GO_Central"/>
</dbReference>
<dbReference type="GO" id="GO:0016567">
    <property type="term" value="P:protein ubiquitination"/>
    <property type="evidence" value="ECO:0000318"/>
    <property type="project" value="GO_Central"/>
</dbReference>
<dbReference type="CDD" id="cd01803">
    <property type="entry name" value="Ubl_ubiquitin"/>
    <property type="match status" value="5"/>
</dbReference>
<dbReference type="FunFam" id="3.10.20.90:FF:000158">
    <property type="entry name" value="Polyubiquitin 5"/>
    <property type="match status" value="2"/>
</dbReference>
<dbReference type="FunFam" id="3.10.20.90:FF:000014">
    <property type="entry name" value="Ubiquitin-60S ribosomal L40 fusion"/>
    <property type="match status" value="3"/>
</dbReference>
<dbReference type="Gene3D" id="3.10.20.90">
    <property type="entry name" value="Phosphatidylinositol 3-kinase Catalytic Subunit, Chain A, domain 1"/>
    <property type="match status" value="5"/>
</dbReference>
<dbReference type="InterPro" id="IPR000626">
    <property type="entry name" value="Ubiquitin-like_dom"/>
</dbReference>
<dbReference type="InterPro" id="IPR029071">
    <property type="entry name" value="Ubiquitin-like_domsf"/>
</dbReference>
<dbReference type="InterPro" id="IPR019954">
    <property type="entry name" value="Ubiquitin_CS"/>
</dbReference>
<dbReference type="InterPro" id="IPR019956">
    <property type="entry name" value="Ubiquitin_dom"/>
</dbReference>
<dbReference type="InterPro" id="IPR050158">
    <property type="entry name" value="Ubiquitin_ubiquitin-like"/>
</dbReference>
<dbReference type="PANTHER" id="PTHR10666">
    <property type="entry name" value="UBIQUITIN"/>
    <property type="match status" value="1"/>
</dbReference>
<dbReference type="Pfam" id="PF00240">
    <property type="entry name" value="ubiquitin"/>
    <property type="match status" value="5"/>
</dbReference>
<dbReference type="PRINTS" id="PR00348">
    <property type="entry name" value="UBIQUITIN"/>
</dbReference>
<dbReference type="SMART" id="SM00213">
    <property type="entry name" value="UBQ"/>
    <property type="match status" value="5"/>
</dbReference>
<dbReference type="SUPFAM" id="SSF54236">
    <property type="entry name" value="Ubiquitin-like"/>
    <property type="match status" value="5"/>
</dbReference>
<dbReference type="PROSITE" id="PS00299">
    <property type="entry name" value="UBIQUITIN_1"/>
    <property type="match status" value="5"/>
</dbReference>
<dbReference type="PROSITE" id="PS50053">
    <property type="entry name" value="UBIQUITIN_2"/>
    <property type="match status" value="5"/>
</dbReference>
<protein>
    <recommendedName>
        <fullName>Polyubiquitin-H</fullName>
    </recommendedName>
    <component>
        <recommendedName>
            <fullName>Ubiquitin</fullName>
        </recommendedName>
    </component>
    <component>
        <recommendedName>
            <fullName>Ubiquitin-like</fullName>
        </recommendedName>
    </component>
</protein>
<reference key="1">
    <citation type="journal article" date="2005" name="Nature">
        <title>The genome of the social amoeba Dictyostelium discoideum.</title>
        <authorList>
            <person name="Eichinger L."/>
            <person name="Pachebat J.A."/>
            <person name="Gloeckner G."/>
            <person name="Rajandream M.A."/>
            <person name="Sucgang R."/>
            <person name="Berriman M."/>
            <person name="Song J."/>
            <person name="Olsen R."/>
            <person name="Szafranski K."/>
            <person name="Xu Q."/>
            <person name="Tunggal B."/>
            <person name="Kummerfeld S."/>
            <person name="Madera M."/>
            <person name="Konfortov B.A."/>
            <person name="Rivero F."/>
            <person name="Bankier A.T."/>
            <person name="Lehmann R."/>
            <person name="Hamlin N."/>
            <person name="Davies R."/>
            <person name="Gaudet P."/>
            <person name="Fey P."/>
            <person name="Pilcher K."/>
            <person name="Chen G."/>
            <person name="Saunders D."/>
            <person name="Sodergren E.J."/>
            <person name="Davis P."/>
            <person name="Kerhornou A."/>
            <person name="Nie X."/>
            <person name="Hall N."/>
            <person name="Anjard C."/>
            <person name="Hemphill L."/>
            <person name="Bason N."/>
            <person name="Farbrother P."/>
            <person name="Desany B."/>
            <person name="Just E."/>
            <person name="Morio T."/>
            <person name="Rost R."/>
            <person name="Churcher C.M."/>
            <person name="Cooper J."/>
            <person name="Haydock S."/>
            <person name="van Driessche N."/>
            <person name="Cronin A."/>
            <person name="Goodhead I."/>
            <person name="Muzny D.M."/>
            <person name="Mourier T."/>
            <person name="Pain A."/>
            <person name="Lu M."/>
            <person name="Harper D."/>
            <person name="Lindsay R."/>
            <person name="Hauser H."/>
            <person name="James K.D."/>
            <person name="Quiles M."/>
            <person name="Madan Babu M."/>
            <person name="Saito T."/>
            <person name="Buchrieser C."/>
            <person name="Wardroper A."/>
            <person name="Felder M."/>
            <person name="Thangavelu M."/>
            <person name="Johnson D."/>
            <person name="Knights A."/>
            <person name="Loulseged H."/>
            <person name="Mungall K.L."/>
            <person name="Oliver K."/>
            <person name="Price C."/>
            <person name="Quail M.A."/>
            <person name="Urushihara H."/>
            <person name="Hernandez J."/>
            <person name="Rabbinowitsch E."/>
            <person name="Steffen D."/>
            <person name="Sanders M."/>
            <person name="Ma J."/>
            <person name="Kohara Y."/>
            <person name="Sharp S."/>
            <person name="Simmonds M.N."/>
            <person name="Spiegler S."/>
            <person name="Tivey A."/>
            <person name="Sugano S."/>
            <person name="White B."/>
            <person name="Walker D."/>
            <person name="Woodward J.R."/>
            <person name="Winckler T."/>
            <person name="Tanaka Y."/>
            <person name="Shaulsky G."/>
            <person name="Schleicher M."/>
            <person name="Weinstock G.M."/>
            <person name="Rosenthal A."/>
            <person name="Cox E.C."/>
            <person name="Chisholm R.L."/>
            <person name="Gibbs R.A."/>
            <person name="Loomis W.F."/>
            <person name="Platzer M."/>
            <person name="Kay R.R."/>
            <person name="Williams J.G."/>
            <person name="Dear P.H."/>
            <person name="Noegel A.A."/>
            <person name="Barrell B.G."/>
            <person name="Kuspa A."/>
        </authorList>
    </citation>
    <scope>NUCLEOTIDE SEQUENCE [LARGE SCALE GENOMIC DNA]</scope>
    <source>
        <strain>AX4</strain>
    </source>
</reference>
<reference key="2">
    <citation type="journal article" date="2006" name="J. Proteome Res.">
        <title>Identification of novel centrosomal proteins in Dictyostelium discoideum by comparative proteomic approaches.</title>
        <authorList>
            <person name="Reinders Y."/>
            <person name="Schulz I."/>
            <person name="Graef R."/>
            <person name="Sickmann A."/>
        </authorList>
    </citation>
    <scope>IDENTIFICATION BY MASS SPECTROMETRY [LARGE SCALE ANALYSIS]</scope>
</reference>
<evidence type="ECO:0000250" key="1"/>
<evidence type="ECO:0000255" key="2">
    <source>
        <dbReference type="PROSITE-ProRule" id="PRU00214"/>
    </source>
</evidence>
<evidence type="ECO:0000305" key="3"/>